<keyword id="KW-0539">Nucleus</keyword>
<keyword id="KW-1185">Reference proteome</keyword>
<keyword id="KW-0677">Repeat</keyword>
<keyword id="KW-0690">Ribosome biogenesis</keyword>
<keyword id="KW-0698">rRNA processing</keyword>
<keyword id="KW-0853">WD repeat</keyword>
<evidence type="ECO:0000250" key="1"/>
<evidence type="ECO:0000255" key="2">
    <source>
        <dbReference type="HAMAP-Rule" id="MF_03029"/>
    </source>
</evidence>
<dbReference type="EMBL" id="CP000496">
    <property type="protein sequence ID" value="ABN64638.2"/>
    <property type="molecule type" value="Genomic_DNA"/>
</dbReference>
<dbReference type="RefSeq" id="XP_001382667.2">
    <property type="nucleotide sequence ID" value="XM_001382630.1"/>
</dbReference>
<dbReference type="SMR" id="A3LQ86"/>
<dbReference type="FunCoup" id="A3LQ86">
    <property type="interactions" value="964"/>
</dbReference>
<dbReference type="STRING" id="322104.A3LQ86"/>
<dbReference type="GeneID" id="4837223"/>
<dbReference type="KEGG" id="pic:PICST_42488"/>
<dbReference type="eggNOG" id="KOG0313">
    <property type="taxonomic scope" value="Eukaryota"/>
</dbReference>
<dbReference type="HOGENOM" id="CLU_000288_57_0_1"/>
<dbReference type="InParanoid" id="A3LQ86"/>
<dbReference type="OMA" id="DHKYVEF"/>
<dbReference type="OrthoDB" id="10251381at2759"/>
<dbReference type="Proteomes" id="UP000002258">
    <property type="component" value="Chromosome 2"/>
</dbReference>
<dbReference type="GO" id="GO:0005654">
    <property type="term" value="C:nucleoplasm"/>
    <property type="evidence" value="ECO:0007669"/>
    <property type="project" value="UniProtKB-SubCell"/>
</dbReference>
<dbReference type="GO" id="GO:0070545">
    <property type="term" value="C:PeBoW complex"/>
    <property type="evidence" value="ECO:0007669"/>
    <property type="project" value="EnsemblFungi"/>
</dbReference>
<dbReference type="GO" id="GO:0030687">
    <property type="term" value="C:preribosome, large subunit precursor"/>
    <property type="evidence" value="ECO:0007669"/>
    <property type="project" value="UniProtKB-UniRule"/>
</dbReference>
<dbReference type="GO" id="GO:0043021">
    <property type="term" value="F:ribonucleoprotein complex binding"/>
    <property type="evidence" value="ECO:0007669"/>
    <property type="project" value="UniProtKB-UniRule"/>
</dbReference>
<dbReference type="GO" id="GO:0051276">
    <property type="term" value="P:chromosome organization"/>
    <property type="evidence" value="ECO:0007669"/>
    <property type="project" value="EnsemblFungi"/>
</dbReference>
<dbReference type="GO" id="GO:0000466">
    <property type="term" value="P:maturation of 5.8S rRNA from tricistronic rRNA transcript (SSU-rRNA, 5.8S rRNA, LSU-rRNA)"/>
    <property type="evidence" value="ECO:0007669"/>
    <property type="project" value="UniProtKB-UniRule"/>
</dbReference>
<dbReference type="GO" id="GO:0000463">
    <property type="term" value="P:maturation of LSU-rRNA from tricistronic rRNA transcript (SSU-rRNA, 5.8S rRNA, LSU-rRNA)"/>
    <property type="evidence" value="ECO:0007669"/>
    <property type="project" value="UniProtKB-UniRule"/>
</dbReference>
<dbReference type="GO" id="GO:0110136">
    <property type="term" value="P:protein-RNA complex remodeling"/>
    <property type="evidence" value="ECO:0007669"/>
    <property type="project" value="EnsemblFungi"/>
</dbReference>
<dbReference type="CDD" id="cd00200">
    <property type="entry name" value="WD40"/>
    <property type="match status" value="1"/>
</dbReference>
<dbReference type="FunFam" id="2.130.10.10:FF:000706">
    <property type="entry name" value="Ribosome biogenesis protein YTM1"/>
    <property type="match status" value="1"/>
</dbReference>
<dbReference type="Gene3D" id="2.130.10.10">
    <property type="entry name" value="YVTN repeat-like/Quinoprotein amine dehydrogenase"/>
    <property type="match status" value="1"/>
</dbReference>
<dbReference type="HAMAP" id="MF_03029">
    <property type="entry name" value="WDR12"/>
    <property type="match status" value="1"/>
</dbReference>
<dbReference type="InterPro" id="IPR020472">
    <property type="entry name" value="G-protein_beta_WD-40_rep"/>
</dbReference>
<dbReference type="InterPro" id="IPR012972">
    <property type="entry name" value="NLE"/>
</dbReference>
<dbReference type="InterPro" id="IPR015943">
    <property type="entry name" value="WD40/YVTN_repeat-like_dom_sf"/>
</dbReference>
<dbReference type="InterPro" id="IPR036322">
    <property type="entry name" value="WD40_repeat_dom_sf"/>
</dbReference>
<dbReference type="InterPro" id="IPR001680">
    <property type="entry name" value="WD40_rpt"/>
</dbReference>
<dbReference type="InterPro" id="IPR028599">
    <property type="entry name" value="WDR12/Ytm1"/>
</dbReference>
<dbReference type="PANTHER" id="PTHR19855:SF11">
    <property type="entry name" value="RIBOSOME BIOGENESIS PROTEIN WDR12"/>
    <property type="match status" value="1"/>
</dbReference>
<dbReference type="PANTHER" id="PTHR19855">
    <property type="entry name" value="WD40 REPEAT PROTEIN 12, 37"/>
    <property type="match status" value="1"/>
</dbReference>
<dbReference type="Pfam" id="PF08154">
    <property type="entry name" value="NLE"/>
    <property type="match status" value="1"/>
</dbReference>
<dbReference type="Pfam" id="PF00400">
    <property type="entry name" value="WD40"/>
    <property type="match status" value="4"/>
</dbReference>
<dbReference type="PRINTS" id="PR00320">
    <property type="entry name" value="GPROTEINBRPT"/>
</dbReference>
<dbReference type="SMART" id="SM00320">
    <property type="entry name" value="WD40"/>
    <property type="match status" value="7"/>
</dbReference>
<dbReference type="SUPFAM" id="SSF50978">
    <property type="entry name" value="WD40 repeat-like"/>
    <property type="match status" value="1"/>
</dbReference>
<dbReference type="PROSITE" id="PS50082">
    <property type="entry name" value="WD_REPEATS_2"/>
    <property type="match status" value="4"/>
</dbReference>
<dbReference type="PROSITE" id="PS50294">
    <property type="entry name" value="WD_REPEATS_REGION"/>
    <property type="match status" value="1"/>
</dbReference>
<accession>A3LQ86</accession>
<proteinExistence type="inferred from homology"/>
<organism>
    <name type="scientific">Scheffersomyces stipitis (strain ATCC 58785 / CBS 6054 / NBRC 10063 / NRRL Y-11545)</name>
    <name type="common">Yeast</name>
    <name type="synonym">Pichia stipitis</name>
    <dbReference type="NCBI Taxonomy" id="322104"/>
    <lineage>
        <taxon>Eukaryota</taxon>
        <taxon>Fungi</taxon>
        <taxon>Dikarya</taxon>
        <taxon>Ascomycota</taxon>
        <taxon>Saccharomycotina</taxon>
        <taxon>Pichiomycetes</taxon>
        <taxon>Debaryomycetaceae</taxon>
        <taxon>Scheffersomyces</taxon>
    </lineage>
</organism>
<sequence>MSDDKSQIKIKFFTNEEDVSLQVSDAPLYVPVSLKRYGLSEVVNQLLGNDGENDDSKPIPFDFLIDGVLLRTSIQDYLTKNGLSSETFLSLEYTRAVLPPSFLASFNNEDWISSLDTINKTLPSVTLSNMMISQPKILSGSYDGIVRTYNMSGNVEKQYVGHSGPIRAVKWVSPTRIVSAGNDRQVRLWKTSADDGSIPEEDEEAEDGRTLAILEGHKAPVVALAVENTSNRILSAGYDHSIGFWSTNYKEMTTIQPLEYDSNVLSSSSKKRRKMALQDSTIRRRSPLALLDSHTQPVEDVIFDNTDATVGYSVSQDHTIKTWDLVTSRCIDTRSTGYSLLSIVQLPKSKLLATGSSARHINLHDPRISNNTTEQTTSKLVGHTNFVVSLAASPNNDNMFASGSHDGTVKVWDIRTDKSLYTITRESPEAVKGADKVFAVSWDNEIGIISGGQDKKIQINKGSDISK</sequence>
<protein>
    <recommendedName>
        <fullName evidence="2">Ribosome biogenesis protein YTM1</fullName>
    </recommendedName>
</protein>
<reference key="1">
    <citation type="journal article" date="2007" name="Nat. Biotechnol.">
        <title>Genome sequence of the lignocellulose-bioconverting and xylose-fermenting yeast Pichia stipitis.</title>
        <authorList>
            <person name="Jeffries T.W."/>
            <person name="Grigoriev I.V."/>
            <person name="Grimwood J."/>
            <person name="Laplaza J.M."/>
            <person name="Aerts A."/>
            <person name="Salamov A."/>
            <person name="Schmutz J."/>
            <person name="Lindquist E."/>
            <person name="Dehal P."/>
            <person name="Shapiro H."/>
            <person name="Jin Y.-S."/>
            <person name="Passoth V."/>
            <person name="Richardson P.M."/>
        </authorList>
    </citation>
    <scope>NUCLEOTIDE SEQUENCE [LARGE SCALE GENOMIC DNA]</scope>
    <source>
        <strain>ATCC 58785 / CBS 6054 / NBRC 10063 / NRRL Y-11545</strain>
    </source>
</reference>
<feature type="chain" id="PRO_0000369598" description="Ribosome biogenesis protein YTM1">
    <location>
        <begin position="1"/>
        <end position="467"/>
    </location>
</feature>
<feature type="repeat" description="WD 1">
    <location>
        <begin position="120"/>
        <end position="159"/>
    </location>
</feature>
<feature type="repeat" description="WD 2">
    <location>
        <begin position="161"/>
        <end position="199"/>
    </location>
</feature>
<feature type="repeat" description="WD 3">
    <location>
        <begin position="216"/>
        <end position="255"/>
    </location>
</feature>
<feature type="repeat" description="WD 4">
    <location>
        <begin position="293"/>
        <end position="333"/>
    </location>
</feature>
<feature type="repeat" description="WD 5">
    <location>
        <begin position="335"/>
        <end position="374"/>
    </location>
</feature>
<feature type="repeat" description="WD 6">
    <location>
        <begin position="382"/>
        <end position="422"/>
    </location>
</feature>
<feature type="repeat" description="WD 7">
    <location>
        <begin position="432"/>
        <end position="467"/>
    </location>
</feature>
<feature type="region of interest" description="Ubiquitin-like (UBL) domain" evidence="2">
    <location>
        <begin position="8"/>
        <end position="95"/>
    </location>
</feature>
<feature type="region of interest" description="Sufficient for interaction with ERB1 and association with 66S pre-ribosomes" evidence="1">
    <location>
        <begin position="105"/>
        <end position="467"/>
    </location>
</feature>
<gene>
    <name evidence="2" type="primary">YTM1</name>
    <name type="ORF">PICST_42488</name>
</gene>
<comment type="function">
    <text evidence="2">Component of the NOP7 complex, which is required for maturation of the 25S and 5.8S ribosomal RNAs and formation of the 60S ribosome.</text>
</comment>
<comment type="subunit">
    <text evidence="2">Component of the NOP7 complex, composed of ERB1, NOP7 and YTM1. The complex is held together by ERB1, which interacts with NOP7 via its N-terminal domain and with YTM1 via a high-affinity interaction between the seven-bladed beta-propeller domains of the 2 proteins. The NOP7 complex associates with the 66S pre-ribosome. Interacts (via UBL domain) with MDN1 (via VWFA/MIDAS domain).</text>
</comment>
<comment type="subcellular location">
    <subcellularLocation>
        <location evidence="2">Nucleus</location>
        <location evidence="2">Nucleolus</location>
    </subcellularLocation>
    <subcellularLocation>
        <location evidence="2">Nucleus</location>
        <location evidence="2">Nucleoplasm</location>
    </subcellularLocation>
</comment>
<comment type="similarity">
    <text evidence="2">Belongs to the WD repeat WDR12/YTM1 family.</text>
</comment>
<name>YTM1_PICST</name>